<reference key="1">
    <citation type="journal article" date="2002" name="Nature">
        <title>Comparison of the genomes of two Xanthomonas pathogens with differing host specificities.</title>
        <authorList>
            <person name="da Silva A.C.R."/>
            <person name="Ferro J.A."/>
            <person name="Reinach F.C."/>
            <person name="Farah C.S."/>
            <person name="Furlan L.R."/>
            <person name="Quaggio R.B."/>
            <person name="Monteiro-Vitorello C.B."/>
            <person name="Van Sluys M.A."/>
            <person name="Almeida N.F. Jr."/>
            <person name="Alves L.M.C."/>
            <person name="do Amaral A.M."/>
            <person name="Bertolini M.C."/>
            <person name="Camargo L.E.A."/>
            <person name="Camarotte G."/>
            <person name="Cannavan F."/>
            <person name="Cardozo J."/>
            <person name="Chambergo F."/>
            <person name="Ciapina L.P."/>
            <person name="Cicarelli R.M.B."/>
            <person name="Coutinho L.L."/>
            <person name="Cursino-Santos J.R."/>
            <person name="El-Dorry H."/>
            <person name="Faria J.B."/>
            <person name="Ferreira A.J.S."/>
            <person name="Ferreira R.C.C."/>
            <person name="Ferro M.I.T."/>
            <person name="Formighieri E.F."/>
            <person name="Franco M.C."/>
            <person name="Greggio C.C."/>
            <person name="Gruber A."/>
            <person name="Katsuyama A.M."/>
            <person name="Kishi L.T."/>
            <person name="Leite R.P."/>
            <person name="Lemos E.G.M."/>
            <person name="Lemos M.V.F."/>
            <person name="Locali E.C."/>
            <person name="Machado M.A."/>
            <person name="Madeira A.M.B.N."/>
            <person name="Martinez-Rossi N.M."/>
            <person name="Martins E.C."/>
            <person name="Meidanis J."/>
            <person name="Menck C.F.M."/>
            <person name="Miyaki C.Y."/>
            <person name="Moon D.H."/>
            <person name="Moreira L.M."/>
            <person name="Novo M.T.M."/>
            <person name="Okura V.K."/>
            <person name="Oliveira M.C."/>
            <person name="Oliveira V.R."/>
            <person name="Pereira H.A."/>
            <person name="Rossi A."/>
            <person name="Sena J.A.D."/>
            <person name="Silva C."/>
            <person name="de Souza R.F."/>
            <person name="Spinola L.A.F."/>
            <person name="Takita M.A."/>
            <person name="Tamura R.E."/>
            <person name="Teixeira E.C."/>
            <person name="Tezza R.I.D."/>
            <person name="Trindade dos Santos M."/>
            <person name="Truffi D."/>
            <person name="Tsai S.M."/>
            <person name="White F.F."/>
            <person name="Setubal J.C."/>
            <person name="Kitajima J.P."/>
        </authorList>
    </citation>
    <scope>NUCLEOTIDE SEQUENCE [LARGE SCALE GENOMIC DNA]</scope>
    <source>
        <strain>ATCC 33913 / DSM 3586 / NCPPB 528 / LMG 568 / P 25</strain>
    </source>
</reference>
<reference key="2">
    <citation type="journal article" date="2017" name="Biochemistry">
        <title>beta-lactone synthetase found in the olefin biosynthesis pathway.</title>
        <authorList>
            <person name="Christenson J.K."/>
            <person name="Richman J.E."/>
            <person name="Jensen M.R."/>
            <person name="Neufeld J.Y."/>
            <person name="Wilmot C.M."/>
            <person name="Wackett L.P."/>
        </authorList>
    </citation>
    <scope>FUNCTION</scope>
    <scope>CATALYTIC ACTIVITY</scope>
</reference>
<reference key="3">
    <citation type="journal article" date="2017" name="J. Bacteriol.">
        <title>Active multienzyme assemblies for long-chain olefinic hydrocarbon biosynthesis.</title>
        <authorList>
            <person name="Christenson J.K."/>
            <person name="Jensen M.R."/>
            <person name="Goblirsch B.R."/>
            <person name="Mohamed F."/>
            <person name="Zhang W."/>
            <person name="Wilmot C.M."/>
            <person name="Wackett L.P."/>
        </authorList>
    </citation>
    <scope>FUNCTION</scope>
    <scope>SUBUNIT</scope>
    <scope>SUBCELLULAR LOCATION</scope>
    <source>
        <strain>ATCC 33913 / DSM 3586 / NCPPB 528 / LMG 568 / P 25</strain>
    </source>
</reference>
<dbReference type="EC" id="4.1.1.114" evidence="2"/>
<dbReference type="EMBL" id="AE008922">
    <property type="protein sequence ID" value="AAM39535.1"/>
    <property type="molecule type" value="Genomic_DNA"/>
</dbReference>
<dbReference type="RefSeq" id="NP_635611.1">
    <property type="nucleotide sequence ID" value="NC_003902.1"/>
</dbReference>
<dbReference type="RefSeq" id="WP_011035472.1">
    <property type="nucleotide sequence ID" value="NC_003902.1"/>
</dbReference>
<dbReference type="SMR" id="Q8PDW8"/>
<dbReference type="STRING" id="190485.XCC0216"/>
<dbReference type="ESTHER" id="xancp-OleB">
    <property type="family name" value="Haloalkane_dehalogenase-HLD1"/>
</dbReference>
<dbReference type="EnsemblBacteria" id="AAM39535">
    <property type="protein sequence ID" value="AAM39535"/>
    <property type="gene ID" value="XCC0216"/>
</dbReference>
<dbReference type="KEGG" id="xcc:XCC0216"/>
<dbReference type="PATRIC" id="fig|190485.4.peg.242"/>
<dbReference type="eggNOG" id="COG0596">
    <property type="taxonomic scope" value="Bacteria"/>
</dbReference>
<dbReference type="HOGENOM" id="CLU_020336_13_3_6"/>
<dbReference type="OrthoDB" id="9773293at2"/>
<dbReference type="BioCyc" id="MetaCyc:MONOMER-20174"/>
<dbReference type="BRENDA" id="4.1.1.114">
    <property type="organism ID" value="9230"/>
</dbReference>
<dbReference type="Proteomes" id="UP000001010">
    <property type="component" value="Chromosome"/>
</dbReference>
<dbReference type="GO" id="GO:0005737">
    <property type="term" value="C:cytoplasm"/>
    <property type="evidence" value="ECO:0007669"/>
    <property type="project" value="UniProtKB-SubCell"/>
</dbReference>
<dbReference type="GO" id="GO:0016020">
    <property type="term" value="C:membrane"/>
    <property type="evidence" value="ECO:0000318"/>
    <property type="project" value="GO_Central"/>
</dbReference>
<dbReference type="GO" id="GO:0016829">
    <property type="term" value="F:lyase activity"/>
    <property type="evidence" value="ECO:0007669"/>
    <property type="project" value="UniProtKB-KW"/>
</dbReference>
<dbReference type="Gene3D" id="3.40.50.1820">
    <property type="entry name" value="alpha/beta hydrolase"/>
    <property type="match status" value="1"/>
</dbReference>
<dbReference type="InterPro" id="IPR000073">
    <property type="entry name" value="AB_hydrolase_1"/>
</dbReference>
<dbReference type="InterPro" id="IPR029058">
    <property type="entry name" value="AB_hydrolase_fold"/>
</dbReference>
<dbReference type="InterPro" id="IPR050266">
    <property type="entry name" value="AB_hydrolase_sf"/>
</dbReference>
<dbReference type="InterPro" id="IPR000639">
    <property type="entry name" value="Epox_hydrolase-like"/>
</dbReference>
<dbReference type="PANTHER" id="PTHR43798:SF24">
    <property type="entry name" value="CIS-3-ALKYL-4-ALKYLOXETAN-2-ONE DECARBOXYLASE"/>
    <property type="match status" value="1"/>
</dbReference>
<dbReference type="PANTHER" id="PTHR43798">
    <property type="entry name" value="MONOACYLGLYCEROL LIPASE"/>
    <property type="match status" value="1"/>
</dbReference>
<dbReference type="Pfam" id="PF00561">
    <property type="entry name" value="Abhydrolase_1"/>
    <property type="match status" value="1"/>
</dbReference>
<dbReference type="PRINTS" id="PR00412">
    <property type="entry name" value="EPOXHYDRLASE"/>
</dbReference>
<dbReference type="SUPFAM" id="SSF53474">
    <property type="entry name" value="alpha/beta-Hydrolases"/>
    <property type="match status" value="1"/>
</dbReference>
<accession>Q8PDW8</accession>
<sequence>MTYPGYSFTPKRLDVRPGIAMSYLDEGPSDGEVVVMLHGNPSWGYLWRHLVSGLSDRYRCIVPDHIGMGLSDKPDDAPDAQPRYDYTLQSRVDDLDRLLQHLGITGPITLAVHDWGGMIGFGWALSHHAQVKRLVITNTAAFPLPPEKPMPWQIAMGRHWRLGEWFIRTFNAFSSGASWLGVSRRMPAAVRRAYVAPYDNWKNRISTIRFMQDIPLSPADQAWSLLERSAQALPSFADRPAFIAWGLRDICFDKHFLAGFRRALPQAEVMAFDDANHYVLEDKHEVLVPAIRAFLERNPL</sequence>
<gene>
    <name evidence="4" type="primary">oleB</name>
    <name evidence="7" type="ordered locus">XCC0216</name>
</gene>
<name>OLEB_XANCP</name>
<organism>
    <name type="scientific">Xanthomonas campestris pv. campestris (strain ATCC 33913 / DSM 3586 / NCPPB 528 / LMG 568 / P 25)</name>
    <dbReference type="NCBI Taxonomy" id="190485"/>
    <lineage>
        <taxon>Bacteria</taxon>
        <taxon>Pseudomonadati</taxon>
        <taxon>Pseudomonadota</taxon>
        <taxon>Gammaproteobacteria</taxon>
        <taxon>Lysobacterales</taxon>
        <taxon>Lysobacteraceae</taxon>
        <taxon>Xanthomonas</taxon>
    </lineage>
</organism>
<protein>
    <recommendedName>
        <fullName evidence="5">Cis-3-alkyl-4-alkyloxetan-2-one decarboxylase</fullName>
        <ecNumber evidence="2">4.1.1.114</ecNumber>
    </recommendedName>
</protein>
<proteinExistence type="evidence at protein level"/>
<keyword id="KW-0963">Cytoplasm</keyword>
<keyword id="KW-0456">Lyase</keyword>
<keyword id="KW-1185">Reference proteome</keyword>
<feature type="chain" id="PRO_0000446914" description="Cis-3-alkyl-4-alkyloxetan-2-one decarboxylase">
    <location>
        <begin position="1"/>
        <end position="300"/>
    </location>
</feature>
<feature type="domain" description="AB hydrolase-1" evidence="1">
    <location>
        <begin position="33"/>
        <end position="282"/>
    </location>
</feature>
<comment type="function">
    <text evidence="2 3">Involved in olefin biosynthesis (PubMed:28029240, PubMed:28223313). Catalyzes the elimination of carbon dioxide from beta-lactones to form the final olefin product (PubMed:28029240).</text>
</comment>
<comment type="catalytic activity">
    <reaction evidence="2">
        <text>a cis-3-alkyl-4-alkyloxetan-2-one = a cis-alkene + CO2</text>
        <dbReference type="Rhea" id="RHEA:18345"/>
        <dbReference type="ChEBI" id="CHEBI:16526"/>
        <dbReference type="ChEBI" id="CHEBI:138483"/>
        <dbReference type="ChEBI" id="CHEBI:139021"/>
        <dbReference type="EC" id="4.1.1.114"/>
    </reaction>
    <physiologicalReaction direction="left-to-right" evidence="2">
        <dbReference type="Rhea" id="RHEA:18346"/>
    </physiologicalReaction>
</comment>
<comment type="subunit">
    <text evidence="3">Homotetramer. Forms a complex with OleC and OleD.</text>
</comment>
<comment type="subcellular location">
    <subcellularLocation>
        <location evidence="6">Cytoplasm</location>
    </subcellularLocation>
</comment>
<comment type="similarity">
    <text evidence="5">Belongs to the AB hydrolase superfamily.</text>
</comment>
<evidence type="ECO:0000255" key="1"/>
<evidence type="ECO:0000269" key="2">
    <source>
    </source>
</evidence>
<evidence type="ECO:0000269" key="3">
    <source>
    </source>
</evidence>
<evidence type="ECO:0000303" key="4">
    <source>
    </source>
</evidence>
<evidence type="ECO:0000305" key="5"/>
<evidence type="ECO:0000305" key="6">
    <source>
    </source>
</evidence>
<evidence type="ECO:0000312" key="7">
    <source>
        <dbReference type="EMBL" id="AAM39535.1"/>
    </source>
</evidence>